<reference key="1">
    <citation type="journal article" date="2008" name="Chem. Biol. Interact.">
        <title>Extending the Bacillus cereus group genomics to putative food-borne pathogens of different toxicity.</title>
        <authorList>
            <person name="Lapidus A."/>
            <person name="Goltsman E."/>
            <person name="Auger S."/>
            <person name="Galleron N."/>
            <person name="Segurens B."/>
            <person name="Dossat C."/>
            <person name="Land M.L."/>
            <person name="Broussolle V."/>
            <person name="Brillard J."/>
            <person name="Guinebretiere M.-H."/>
            <person name="Sanchis V."/>
            <person name="Nguen-the C."/>
            <person name="Lereclus D."/>
            <person name="Richardson P."/>
            <person name="Wincker P."/>
            <person name="Weissenbach J."/>
            <person name="Ehrlich S.D."/>
            <person name="Sorokin A."/>
        </authorList>
    </citation>
    <scope>NUCLEOTIDE SEQUENCE [LARGE SCALE GENOMIC DNA]</scope>
    <source>
        <strain>DSM 22905 / CIP 110041 / 391-98 / NVH 391-98</strain>
    </source>
</reference>
<dbReference type="EC" id="3.4.19.3" evidence="1"/>
<dbReference type="EMBL" id="CP000764">
    <property type="protein sequence ID" value="ABS22324.1"/>
    <property type="molecule type" value="Genomic_DNA"/>
</dbReference>
<dbReference type="RefSeq" id="WP_012094517.1">
    <property type="nucleotide sequence ID" value="NC_009674.1"/>
</dbReference>
<dbReference type="SMR" id="A7GQB6"/>
<dbReference type="STRING" id="315749.Bcer98_2056"/>
<dbReference type="MEROPS" id="C15.001"/>
<dbReference type="GeneID" id="33897349"/>
<dbReference type="KEGG" id="bcy:Bcer98_2056"/>
<dbReference type="eggNOG" id="COG2039">
    <property type="taxonomic scope" value="Bacteria"/>
</dbReference>
<dbReference type="HOGENOM" id="CLU_043960_4_0_9"/>
<dbReference type="OrthoDB" id="9779738at2"/>
<dbReference type="Proteomes" id="UP000002300">
    <property type="component" value="Chromosome"/>
</dbReference>
<dbReference type="GO" id="GO:0005829">
    <property type="term" value="C:cytosol"/>
    <property type="evidence" value="ECO:0007669"/>
    <property type="project" value="InterPro"/>
</dbReference>
<dbReference type="GO" id="GO:0016920">
    <property type="term" value="F:pyroglutamyl-peptidase activity"/>
    <property type="evidence" value="ECO:0007669"/>
    <property type="project" value="UniProtKB-UniRule"/>
</dbReference>
<dbReference type="GO" id="GO:0006508">
    <property type="term" value="P:proteolysis"/>
    <property type="evidence" value="ECO:0007669"/>
    <property type="project" value="UniProtKB-KW"/>
</dbReference>
<dbReference type="CDD" id="cd00501">
    <property type="entry name" value="Peptidase_C15"/>
    <property type="match status" value="1"/>
</dbReference>
<dbReference type="FunFam" id="3.40.630.20:FF:000001">
    <property type="entry name" value="Pyrrolidone-carboxylate peptidase"/>
    <property type="match status" value="1"/>
</dbReference>
<dbReference type="Gene3D" id="3.40.630.20">
    <property type="entry name" value="Peptidase C15, pyroglutamyl peptidase I-like"/>
    <property type="match status" value="1"/>
</dbReference>
<dbReference type="HAMAP" id="MF_00417">
    <property type="entry name" value="Pyrrolid_peptidase"/>
    <property type="match status" value="1"/>
</dbReference>
<dbReference type="InterPro" id="IPR000816">
    <property type="entry name" value="Peptidase_C15"/>
</dbReference>
<dbReference type="InterPro" id="IPR016125">
    <property type="entry name" value="Peptidase_C15-like"/>
</dbReference>
<dbReference type="InterPro" id="IPR036440">
    <property type="entry name" value="Peptidase_C15-like_sf"/>
</dbReference>
<dbReference type="InterPro" id="IPR029762">
    <property type="entry name" value="PGP-I_bact-type"/>
</dbReference>
<dbReference type="InterPro" id="IPR033694">
    <property type="entry name" value="PGPEP1_Cys_AS"/>
</dbReference>
<dbReference type="InterPro" id="IPR033693">
    <property type="entry name" value="PGPEP1_Glu_AS"/>
</dbReference>
<dbReference type="NCBIfam" id="NF009676">
    <property type="entry name" value="PRK13197.1"/>
    <property type="match status" value="1"/>
</dbReference>
<dbReference type="NCBIfam" id="TIGR00504">
    <property type="entry name" value="pyro_pdase"/>
    <property type="match status" value="1"/>
</dbReference>
<dbReference type="PANTHER" id="PTHR23402">
    <property type="entry name" value="PROTEASE FAMILY C15 PYROGLUTAMYL-PEPTIDASE I-RELATED"/>
    <property type="match status" value="1"/>
</dbReference>
<dbReference type="PANTHER" id="PTHR23402:SF1">
    <property type="entry name" value="PYROGLUTAMYL-PEPTIDASE I"/>
    <property type="match status" value="1"/>
</dbReference>
<dbReference type="Pfam" id="PF01470">
    <property type="entry name" value="Peptidase_C15"/>
    <property type="match status" value="1"/>
</dbReference>
<dbReference type="PIRSF" id="PIRSF015592">
    <property type="entry name" value="Prld-crbxl_pptds"/>
    <property type="match status" value="1"/>
</dbReference>
<dbReference type="PRINTS" id="PR00706">
    <property type="entry name" value="PYROGLUPTASE"/>
</dbReference>
<dbReference type="SUPFAM" id="SSF53182">
    <property type="entry name" value="Pyrrolidone carboxyl peptidase (pyroglutamate aminopeptidase)"/>
    <property type="match status" value="1"/>
</dbReference>
<dbReference type="PROSITE" id="PS01334">
    <property type="entry name" value="PYRASE_CYS"/>
    <property type="match status" value="1"/>
</dbReference>
<dbReference type="PROSITE" id="PS01333">
    <property type="entry name" value="PYRASE_GLU"/>
    <property type="match status" value="1"/>
</dbReference>
<organism>
    <name type="scientific">Bacillus cytotoxicus (strain DSM 22905 / CIP 110041 / 391-98 / NVH 391-98)</name>
    <dbReference type="NCBI Taxonomy" id="315749"/>
    <lineage>
        <taxon>Bacteria</taxon>
        <taxon>Bacillati</taxon>
        <taxon>Bacillota</taxon>
        <taxon>Bacilli</taxon>
        <taxon>Bacillales</taxon>
        <taxon>Bacillaceae</taxon>
        <taxon>Bacillus</taxon>
        <taxon>Bacillus cereus group</taxon>
    </lineage>
</organism>
<proteinExistence type="inferred from homology"/>
<comment type="function">
    <text evidence="1">Removes 5-oxoproline from various penultimate amino acid residues except L-proline.</text>
</comment>
<comment type="catalytic activity">
    <reaction evidence="1">
        <text>Release of an N-terminal pyroglutamyl group from a polypeptide, the second amino acid generally not being Pro.</text>
        <dbReference type="EC" id="3.4.19.3"/>
    </reaction>
</comment>
<comment type="subunit">
    <text evidence="1">Homotetramer.</text>
</comment>
<comment type="subcellular location">
    <subcellularLocation>
        <location evidence="1">Cytoplasm</location>
    </subcellularLocation>
</comment>
<comment type="similarity">
    <text evidence="1">Belongs to the peptidase C15 family.</text>
</comment>
<gene>
    <name evidence="1" type="primary">pcp</name>
    <name type="ordered locus">Bcer98_2056</name>
</gene>
<accession>A7GQB6</accession>
<name>PCP_BACCN</name>
<evidence type="ECO:0000255" key="1">
    <source>
        <dbReference type="HAMAP-Rule" id="MF_00417"/>
    </source>
</evidence>
<protein>
    <recommendedName>
        <fullName evidence="1">Pyrrolidone-carboxylate peptidase</fullName>
        <ecNumber evidence="1">3.4.19.3</ecNumber>
    </recommendedName>
    <alternativeName>
        <fullName evidence="1">5-oxoprolyl-peptidase</fullName>
    </alternativeName>
    <alternativeName>
        <fullName evidence="1">Pyroglutamyl-peptidase I</fullName>
        <shortName evidence="1">PGP-I</shortName>
        <shortName evidence="1">Pyrase</shortName>
    </alternativeName>
</protein>
<sequence>MKTVLLTGFDPFGGEKINPAWEVAKALHEKEGNGYKVISKQIPTVFHKSIEQLESYIDEFNPELIICIGQAGGRADITVERVAINVDDARIPDNENYQPIDVPIIEDGPVAYWSTLPIKAIVKKLREEGIPASVSQTAGTFVCNHLFYGLMHRLAIKNKSTRGGFVHIPFLPEQASLHANQPSMSLSTIIAGIQLLIEVALQVEKDIVECGGTTH</sequence>
<feature type="chain" id="PRO_1000080514" description="Pyrrolidone-carboxylate peptidase">
    <location>
        <begin position="1"/>
        <end position="215"/>
    </location>
</feature>
<feature type="active site" evidence="1">
    <location>
        <position position="80"/>
    </location>
</feature>
<feature type="active site" evidence="1">
    <location>
        <position position="143"/>
    </location>
</feature>
<feature type="active site" evidence="1">
    <location>
        <position position="167"/>
    </location>
</feature>
<keyword id="KW-0963">Cytoplasm</keyword>
<keyword id="KW-0378">Hydrolase</keyword>
<keyword id="KW-0645">Protease</keyword>
<keyword id="KW-0788">Thiol protease</keyword>